<evidence type="ECO:0000255" key="1">
    <source>
        <dbReference type="HAMAP-Rule" id="MF_01832"/>
    </source>
</evidence>
<reference key="1">
    <citation type="journal article" date="2004" name="Nat. Genet.">
        <title>Comparison of genome degradation in Paratyphi A and Typhi, human-restricted serovars of Salmonella enterica that cause typhoid.</title>
        <authorList>
            <person name="McClelland M."/>
            <person name="Sanderson K.E."/>
            <person name="Clifton S.W."/>
            <person name="Latreille P."/>
            <person name="Porwollik S."/>
            <person name="Sabo A."/>
            <person name="Meyer R."/>
            <person name="Bieri T."/>
            <person name="Ozersky P."/>
            <person name="McLellan M."/>
            <person name="Harkins C.R."/>
            <person name="Wang C."/>
            <person name="Nguyen C."/>
            <person name="Berghoff A."/>
            <person name="Elliott G."/>
            <person name="Kohlberg S."/>
            <person name="Strong C."/>
            <person name="Du F."/>
            <person name="Carter J."/>
            <person name="Kremizki C."/>
            <person name="Layman D."/>
            <person name="Leonard S."/>
            <person name="Sun H."/>
            <person name="Fulton L."/>
            <person name="Nash W."/>
            <person name="Miner T."/>
            <person name="Minx P."/>
            <person name="Delehaunty K."/>
            <person name="Fronick C."/>
            <person name="Magrini V."/>
            <person name="Nhan M."/>
            <person name="Warren W."/>
            <person name="Florea L."/>
            <person name="Spieth J."/>
            <person name="Wilson R.K."/>
        </authorList>
    </citation>
    <scope>NUCLEOTIDE SEQUENCE [LARGE SCALE GENOMIC DNA]</scope>
    <source>
        <strain>ATCC 9150 / SARB42</strain>
    </source>
</reference>
<comment type="function">
    <text evidence="1">Participates in cysteine desulfuration mediated by SufS. Cysteine desulfuration mobilizes sulfur from L-cysteine to yield L-alanine and constitutes an essential step in sulfur metabolism for biosynthesis of a variety of sulfur-containing biomolecules. Functions as a sulfur acceptor for SufS, by mediating the direct transfer of the sulfur atom from the S-sulfanylcysteine of SufS, an intermediate product of cysteine desulfuration process.</text>
</comment>
<comment type="pathway">
    <text evidence="1">Cofactor biosynthesis; iron-sulfur cluster biosynthesis.</text>
</comment>
<comment type="subunit">
    <text evidence="1">Homodimer. Interacts with SufS.</text>
</comment>
<comment type="subcellular location">
    <subcellularLocation>
        <location evidence="1">Cytoplasm</location>
    </subcellularLocation>
</comment>
<comment type="similarity">
    <text evidence="1">Belongs to the SufE family.</text>
</comment>
<organism>
    <name type="scientific">Salmonella paratyphi A (strain ATCC 9150 / SARB42)</name>
    <dbReference type="NCBI Taxonomy" id="295319"/>
    <lineage>
        <taxon>Bacteria</taxon>
        <taxon>Pseudomonadati</taxon>
        <taxon>Pseudomonadota</taxon>
        <taxon>Gammaproteobacteria</taxon>
        <taxon>Enterobacterales</taxon>
        <taxon>Enterobacteriaceae</taxon>
        <taxon>Salmonella</taxon>
    </lineage>
</organism>
<keyword id="KW-0963">Cytoplasm</keyword>
<name>SUFE_SALPA</name>
<feature type="chain" id="PRO_1000070445" description="Cysteine desulfuration protein SufE">
    <location>
        <begin position="1"/>
        <end position="138"/>
    </location>
</feature>
<feature type="active site" description="Cysteine persulfide intermediate" evidence="1">
    <location>
        <position position="51"/>
    </location>
</feature>
<gene>
    <name evidence="1" type="primary">sufE</name>
    <name type="ordered locus">SPA1480</name>
</gene>
<dbReference type="EMBL" id="CP000026">
    <property type="protein sequence ID" value="AAV77417.1"/>
    <property type="molecule type" value="Genomic_DNA"/>
</dbReference>
<dbReference type="RefSeq" id="WP_000729470.1">
    <property type="nucleotide sequence ID" value="NC_006511.1"/>
</dbReference>
<dbReference type="SMR" id="Q5PH69"/>
<dbReference type="KEGG" id="spt:SPA1480"/>
<dbReference type="HOGENOM" id="CLU_124502_1_1_6"/>
<dbReference type="UniPathway" id="UPA00266"/>
<dbReference type="Proteomes" id="UP000008185">
    <property type="component" value="Chromosome"/>
</dbReference>
<dbReference type="GO" id="GO:0005737">
    <property type="term" value="C:cytoplasm"/>
    <property type="evidence" value="ECO:0007669"/>
    <property type="project" value="UniProtKB-SubCell"/>
</dbReference>
<dbReference type="GO" id="GO:0016226">
    <property type="term" value="P:iron-sulfur cluster assembly"/>
    <property type="evidence" value="ECO:0007669"/>
    <property type="project" value="InterPro"/>
</dbReference>
<dbReference type="GO" id="GO:0006790">
    <property type="term" value="P:sulfur compound metabolic process"/>
    <property type="evidence" value="ECO:0007669"/>
    <property type="project" value="InterPro"/>
</dbReference>
<dbReference type="Gene3D" id="3.90.1010.10">
    <property type="match status" value="1"/>
</dbReference>
<dbReference type="HAMAP" id="MF_01832">
    <property type="entry name" value="SufE"/>
    <property type="match status" value="1"/>
</dbReference>
<dbReference type="InterPro" id="IPR023939">
    <property type="entry name" value="Cysteine_desulfuration_SufE"/>
</dbReference>
<dbReference type="InterPro" id="IPR003808">
    <property type="entry name" value="Fe-S_metab-assoc_dom"/>
</dbReference>
<dbReference type="NCBIfam" id="NF006792">
    <property type="entry name" value="PRK09296.1"/>
    <property type="match status" value="1"/>
</dbReference>
<dbReference type="PANTHER" id="PTHR43597:SF3">
    <property type="entry name" value="CYSTEINE DESULFURATION PROTEIN SUFE"/>
    <property type="match status" value="1"/>
</dbReference>
<dbReference type="PANTHER" id="PTHR43597">
    <property type="entry name" value="SULFUR ACCEPTOR PROTEIN CSDE"/>
    <property type="match status" value="1"/>
</dbReference>
<dbReference type="Pfam" id="PF02657">
    <property type="entry name" value="SufE"/>
    <property type="match status" value="1"/>
</dbReference>
<dbReference type="SUPFAM" id="SSF82649">
    <property type="entry name" value="SufE/NifU"/>
    <property type="match status" value="1"/>
</dbReference>
<sequence>MAALPDKEKLLRNFTRCANWEEKYLYIIELGQRLAELNPQDRNPQNTIHGCQSQVWIVMRRNANGIIELQGDSDAAIVKGLMAVVFILYHQMTAQDIVHFDVRPWFEKMALTQHLTPSRSQGLEAMIRAIRAKAATLS</sequence>
<protein>
    <recommendedName>
        <fullName evidence="1">Cysteine desulfuration protein SufE</fullName>
    </recommendedName>
</protein>
<proteinExistence type="inferred from homology"/>
<accession>Q5PH69</accession>